<name>DNAJ_STRP8</name>
<organism>
    <name type="scientific">Streptococcus pyogenes serotype M18 (strain MGAS8232)</name>
    <dbReference type="NCBI Taxonomy" id="186103"/>
    <lineage>
        <taxon>Bacteria</taxon>
        <taxon>Bacillati</taxon>
        <taxon>Bacillota</taxon>
        <taxon>Bacilli</taxon>
        <taxon>Lactobacillales</taxon>
        <taxon>Streptococcaceae</taxon>
        <taxon>Streptococcus</taxon>
    </lineage>
</organism>
<feature type="chain" id="PRO_0000070907" description="Chaperone protein DnaJ">
    <location>
        <begin position="1"/>
        <end position="378"/>
    </location>
</feature>
<feature type="domain" description="J" evidence="1">
    <location>
        <begin position="5"/>
        <end position="69"/>
    </location>
</feature>
<feature type="repeat" description="CXXCXGXG motif">
    <location>
        <begin position="147"/>
        <end position="154"/>
    </location>
</feature>
<feature type="repeat" description="CXXCXGXG motif">
    <location>
        <begin position="164"/>
        <end position="171"/>
    </location>
</feature>
<feature type="repeat" description="CXXCXGXG motif">
    <location>
        <begin position="190"/>
        <end position="197"/>
    </location>
</feature>
<feature type="repeat" description="CXXCXGXG motif">
    <location>
        <begin position="204"/>
        <end position="211"/>
    </location>
</feature>
<feature type="zinc finger region" description="CR-type" evidence="1">
    <location>
        <begin position="134"/>
        <end position="216"/>
    </location>
</feature>
<feature type="binding site" evidence="1">
    <location>
        <position position="147"/>
    </location>
    <ligand>
        <name>Zn(2+)</name>
        <dbReference type="ChEBI" id="CHEBI:29105"/>
        <label>1</label>
    </ligand>
</feature>
<feature type="binding site" evidence="1">
    <location>
        <position position="150"/>
    </location>
    <ligand>
        <name>Zn(2+)</name>
        <dbReference type="ChEBI" id="CHEBI:29105"/>
        <label>1</label>
    </ligand>
</feature>
<feature type="binding site" evidence="1">
    <location>
        <position position="164"/>
    </location>
    <ligand>
        <name>Zn(2+)</name>
        <dbReference type="ChEBI" id="CHEBI:29105"/>
        <label>2</label>
    </ligand>
</feature>
<feature type="binding site" evidence="1">
    <location>
        <position position="167"/>
    </location>
    <ligand>
        <name>Zn(2+)</name>
        <dbReference type="ChEBI" id="CHEBI:29105"/>
        <label>2</label>
    </ligand>
</feature>
<feature type="binding site" evidence="1">
    <location>
        <position position="190"/>
    </location>
    <ligand>
        <name>Zn(2+)</name>
        <dbReference type="ChEBI" id="CHEBI:29105"/>
        <label>2</label>
    </ligand>
</feature>
<feature type="binding site" evidence="1">
    <location>
        <position position="193"/>
    </location>
    <ligand>
        <name>Zn(2+)</name>
        <dbReference type="ChEBI" id="CHEBI:29105"/>
        <label>2</label>
    </ligand>
</feature>
<feature type="binding site" evidence="1">
    <location>
        <position position="204"/>
    </location>
    <ligand>
        <name>Zn(2+)</name>
        <dbReference type="ChEBI" id="CHEBI:29105"/>
        <label>1</label>
    </ligand>
</feature>
<feature type="binding site" evidence="1">
    <location>
        <position position="207"/>
    </location>
    <ligand>
        <name>Zn(2+)</name>
        <dbReference type="ChEBI" id="CHEBI:29105"/>
        <label>1</label>
    </ligand>
</feature>
<evidence type="ECO:0000255" key="1">
    <source>
        <dbReference type="HAMAP-Rule" id="MF_01152"/>
    </source>
</evidence>
<dbReference type="EMBL" id="AE009949">
    <property type="protein sequence ID" value="AAL98348.1"/>
    <property type="molecule type" value="Genomic_DNA"/>
</dbReference>
<dbReference type="RefSeq" id="WP_011018158.1">
    <property type="nucleotide sequence ID" value="NC_003485.1"/>
</dbReference>
<dbReference type="SMR" id="Q8NZM7"/>
<dbReference type="KEGG" id="spm:spyM18_1830"/>
<dbReference type="HOGENOM" id="CLU_017633_0_7_9"/>
<dbReference type="GO" id="GO:0005737">
    <property type="term" value="C:cytoplasm"/>
    <property type="evidence" value="ECO:0007669"/>
    <property type="project" value="UniProtKB-SubCell"/>
</dbReference>
<dbReference type="GO" id="GO:0005524">
    <property type="term" value="F:ATP binding"/>
    <property type="evidence" value="ECO:0007669"/>
    <property type="project" value="InterPro"/>
</dbReference>
<dbReference type="GO" id="GO:0031072">
    <property type="term" value="F:heat shock protein binding"/>
    <property type="evidence" value="ECO:0007669"/>
    <property type="project" value="InterPro"/>
</dbReference>
<dbReference type="GO" id="GO:0051082">
    <property type="term" value="F:unfolded protein binding"/>
    <property type="evidence" value="ECO:0007669"/>
    <property type="project" value="UniProtKB-UniRule"/>
</dbReference>
<dbReference type="GO" id="GO:0008270">
    <property type="term" value="F:zinc ion binding"/>
    <property type="evidence" value="ECO:0007669"/>
    <property type="project" value="UniProtKB-UniRule"/>
</dbReference>
<dbReference type="GO" id="GO:0051085">
    <property type="term" value="P:chaperone cofactor-dependent protein refolding"/>
    <property type="evidence" value="ECO:0007669"/>
    <property type="project" value="TreeGrafter"/>
</dbReference>
<dbReference type="GO" id="GO:0006260">
    <property type="term" value="P:DNA replication"/>
    <property type="evidence" value="ECO:0007669"/>
    <property type="project" value="UniProtKB-KW"/>
</dbReference>
<dbReference type="GO" id="GO:0042026">
    <property type="term" value="P:protein refolding"/>
    <property type="evidence" value="ECO:0007669"/>
    <property type="project" value="TreeGrafter"/>
</dbReference>
<dbReference type="GO" id="GO:0009408">
    <property type="term" value="P:response to heat"/>
    <property type="evidence" value="ECO:0007669"/>
    <property type="project" value="InterPro"/>
</dbReference>
<dbReference type="CDD" id="cd06257">
    <property type="entry name" value="DnaJ"/>
    <property type="match status" value="1"/>
</dbReference>
<dbReference type="CDD" id="cd10747">
    <property type="entry name" value="DnaJ_C"/>
    <property type="match status" value="1"/>
</dbReference>
<dbReference type="CDD" id="cd10719">
    <property type="entry name" value="DnaJ_zf"/>
    <property type="match status" value="1"/>
</dbReference>
<dbReference type="FunFam" id="1.10.287.110:FF:000031">
    <property type="entry name" value="Molecular chaperone DnaJ"/>
    <property type="match status" value="1"/>
</dbReference>
<dbReference type="FunFam" id="2.10.230.10:FF:000002">
    <property type="entry name" value="Molecular chaperone DnaJ"/>
    <property type="match status" value="1"/>
</dbReference>
<dbReference type="FunFam" id="2.60.260.20:FF:000004">
    <property type="entry name" value="Molecular chaperone DnaJ"/>
    <property type="match status" value="1"/>
</dbReference>
<dbReference type="Gene3D" id="1.10.287.110">
    <property type="entry name" value="DnaJ domain"/>
    <property type="match status" value="1"/>
</dbReference>
<dbReference type="Gene3D" id="2.10.230.10">
    <property type="entry name" value="Heat shock protein DnaJ, cysteine-rich domain"/>
    <property type="match status" value="1"/>
</dbReference>
<dbReference type="Gene3D" id="2.60.260.20">
    <property type="entry name" value="Urease metallochaperone UreE, N-terminal domain"/>
    <property type="match status" value="2"/>
</dbReference>
<dbReference type="HAMAP" id="MF_01152">
    <property type="entry name" value="DnaJ"/>
    <property type="match status" value="1"/>
</dbReference>
<dbReference type="InterPro" id="IPR012724">
    <property type="entry name" value="DnaJ"/>
</dbReference>
<dbReference type="InterPro" id="IPR002939">
    <property type="entry name" value="DnaJ_C"/>
</dbReference>
<dbReference type="InterPro" id="IPR001623">
    <property type="entry name" value="DnaJ_domain"/>
</dbReference>
<dbReference type="InterPro" id="IPR018253">
    <property type="entry name" value="DnaJ_domain_CS"/>
</dbReference>
<dbReference type="InterPro" id="IPR008971">
    <property type="entry name" value="HSP40/DnaJ_pept-bd"/>
</dbReference>
<dbReference type="InterPro" id="IPR001305">
    <property type="entry name" value="HSP_DnaJ_Cys-rich_dom"/>
</dbReference>
<dbReference type="InterPro" id="IPR036410">
    <property type="entry name" value="HSP_DnaJ_Cys-rich_dom_sf"/>
</dbReference>
<dbReference type="InterPro" id="IPR036869">
    <property type="entry name" value="J_dom_sf"/>
</dbReference>
<dbReference type="NCBIfam" id="TIGR02349">
    <property type="entry name" value="DnaJ_bact"/>
    <property type="match status" value="1"/>
</dbReference>
<dbReference type="NCBIfam" id="NF008035">
    <property type="entry name" value="PRK10767.1"/>
    <property type="match status" value="1"/>
</dbReference>
<dbReference type="NCBIfam" id="NF010869">
    <property type="entry name" value="PRK14276.1"/>
    <property type="match status" value="1"/>
</dbReference>
<dbReference type="PANTHER" id="PTHR43096:SF48">
    <property type="entry name" value="CHAPERONE PROTEIN DNAJ"/>
    <property type="match status" value="1"/>
</dbReference>
<dbReference type="PANTHER" id="PTHR43096">
    <property type="entry name" value="DNAJ HOMOLOG 1, MITOCHONDRIAL-RELATED"/>
    <property type="match status" value="1"/>
</dbReference>
<dbReference type="Pfam" id="PF00226">
    <property type="entry name" value="DnaJ"/>
    <property type="match status" value="1"/>
</dbReference>
<dbReference type="Pfam" id="PF01556">
    <property type="entry name" value="DnaJ_C"/>
    <property type="match status" value="1"/>
</dbReference>
<dbReference type="Pfam" id="PF00684">
    <property type="entry name" value="DnaJ_CXXCXGXG"/>
    <property type="match status" value="1"/>
</dbReference>
<dbReference type="PRINTS" id="PR00625">
    <property type="entry name" value="JDOMAIN"/>
</dbReference>
<dbReference type="SMART" id="SM00271">
    <property type="entry name" value="DnaJ"/>
    <property type="match status" value="1"/>
</dbReference>
<dbReference type="SUPFAM" id="SSF46565">
    <property type="entry name" value="Chaperone J-domain"/>
    <property type="match status" value="1"/>
</dbReference>
<dbReference type="SUPFAM" id="SSF57938">
    <property type="entry name" value="DnaJ/Hsp40 cysteine-rich domain"/>
    <property type="match status" value="1"/>
</dbReference>
<dbReference type="SUPFAM" id="SSF49493">
    <property type="entry name" value="HSP40/DnaJ peptide-binding domain"/>
    <property type="match status" value="2"/>
</dbReference>
<dbReference type="PROSITE" id="PS00636">
    <property type="entry name" value="DNAJ_1"/>
    <property type="match status" value="1"/>
</dbReference>
<dbReference type="PROSITE" id="PS50076">
    <property type="entry name" value="DNAJ_2"/>
    <property type="match status" value="1"/>
</dbReference>
<dbReference type="PROSITE" id="PS51188">
    <property type="entry name" value="ZF_CR"/>
    <property type="match status" value="1"/>
</dbReference>
<protein>
    <recommendedName>
        <fullName evidence="1">Chaperone protein DnaJ</fullName>
    </recommendedName>
</protein>
<accession>Q8NZM7</accession>
<reference key="1">
    <citation type="journal article" date="2002" name="Proc. Natl. Acad. Sci. U.S.A.">
        <title>Genome sequence and comparative microarray analysis of serotype M18 group A Streptococcus strains associated with acute rheumatic fever outbreaks.</title>
        <authorList>
            <person name="Smoot J.C."/>
            <person name="Barbian K.D."/>
            <person name="Van Gompel J.J."/>
            <person name="Smoot L.M."/>
            <person name="Chaussee M.S."/>
            <person name="Sylva G.L."/>
            <person name="Sturdevant D.E."/>
            <person name="Ricklefs S.M."/>
            <person name="Porcella S.F."/>
            <person name="Parkins L.D."/>
            <person name="Beres S.B."/>
            <person name="Campbell D.S."/>
            <person name="Smith T.M."/>
            <person name="Zhang Q."/>
            <person name="Kapur V."/>
            <person name="Daly J.A."/>
            <person name="Veasy L.G."/>
            <person name="Musser J.M."/>
        </authorList>
    </citation>
    <scope>NUCLEOTIDE SEQUENCE [LARGE SCALE GENOMIC DNA]</scope>
    <source>
        <strain>MGAS8232</strain>
    </source>
</reference>
<comment type="function">
    <text evidence="1">Participates actively in the response to hyperosmotic and heat shock by preventing the aggregation of stress-denatured proteins and by disaggregating proteins, also in an autonomous, DnaK-independent fashion. Unfolded proteins bind initially to DnaJ; upon interaction with the DnaJ-bound protein, DnaK hydrolyzes its bound ATP, resulting in the formation of a stable complex. GrpE releases ADP from DnaK; ATP binding to DnaK triggers the release of the substrate protein, thus completing the reaction cycle. Several rounds of ATP-dependent interactions between DnaJ, DnaK and GrpE are required for fully efficient folding. Also involved, together with DnaK and GrpE, in the DNA replication of plasmids through activation of initiation proteins.</text>
</comment>
<comment type="cofactor">
    <cofactor evidence="1">
        <name>Zn(2+)</name>
        <dbReference type="ChEBI" id="CHEBI:29105"/>
    </cofactor>
    <text evidence="1">Binds 2 Zn(2+) ions per monomer.</text>
</comment>
<comment type="subunit">
    <text evidence="1">Homodimer.</text>
</comment>
<comment type="subcellular location">
    <subcellularLocation>
        <location evidence="1">Cytoplasm</location>
    </subcellularLocation>
</comment>
<comment type="domain">
    <text evidence="1">The J domain is necessary and sufficient to stimulate DnaK ATPase activity. Zinc center 1 plays an important role in the autonomous, DnaK-independent chaperone activity of DnaJ. Zinc center 2 is essential for interaction with DnaK and for DnaJ activity.</text>
</comment>
<comment type="similarity">
    <text evidence="1">Belongs to the DnaJ family.</text>
</comment>
<sequence>MNNTEYYDRLGVSKDASQDDIKKAYRKMSKKYHPDINKEAGAEQKYKDVQEAYETLSDSQKRAAYDQYGAAGAQGGFGGGAGGFGGFDGGGFGGFEDIFSSFFGGGGSRNPNAPRQGDDLQYRVNLSFEEAVFGVEKEVSYNREATCGTCLGSGAKPGTAPVTCRKCHGSGVMTIDTQTPLGMMRRQVTCDICHGSGKEIKEPCQTCHGTGHEKQAHKVSVKIPAGVETGQQIRLQGQGEAGFNGGPYGDLFVILNVLPSKQFERNGSTIYYSLDISFTQAALGDTVEIPTVHGDVEMAIPAGTQTGKTFRLKGKGAPKLRGGGQGDQHVTVNIVTPTKLNDAQREALQAFAEASGDKMLHPKKKGFFDKVKDALEDI</sequence>
<proteinExistence type="inferred from homology"/>
<gene>
    <name evidence="1" type="primary">dnaJ</name>
    <name type="ordered locus">spyM18_1830</name>
</gene>
<keyword id="KW-0143">Chaperone</keyword>
<keyword id="KW-0963">Cytoplasm</keyword>
<keyword id="KW-0235">DNA replication</keyword>
<keyword id="KW-0479">Metal-binding</keyword>
<keyword id="KW-0677">Repeat</keyword>
<keyword id="KW-0346">Stress response</keyword>
<keyword id="KW-0862">Zinc</keyword>
<keyword id="KW-0863">Zinc-finger</keyword>